<name>PBL_ECOLI</name>
<sequence length="158" mass="18277">MRSPKVKFLTIFTFCIFITKMSFASNSCSNEAGTMFRIEPNLIKAIALVESNLKKDSIGKNRDKNNNIKSLDYWLMQINQMHIPLLKKRGIIKDERDLLDNPCLNIKIGTEILYNHFSRCGVTWQCLGTYNAGFAMDNQKKRQQYAPKYILYIPGLMN</sequence>
<feature type="signal peptide" evidence="1">
    <location>
        <begin position="1"/>
        <end position="24"/>
    </location>
</feature>
<feature type="chain" id="PRO_0000022018" description="Putative peptidoglycan-binding-like protein">
    <location>
        <begin position="25"/>
        <end position="158"/>
    </location>
</feature>
<comment type="subcellular location">
    <subcellularLocation>
        <location evidence="2">Periplasm</location>
    </subcellularLocation>
</comment>
<comment type="similarity">
    <text evidence="2">Belongs to the IagB/IpgF/P19 family.</text>
</comment>
<comment type="caution">
    <text evidence="2">Could be the product of a pseudogene.</text>
</comment>
<comment type="sequence caution" evidence="2">
    <conflict type="erroneous initiation">
        <sequence resource="EMBL-CDS" id="AAA83036"/>
    </conflict>
</comment>
<gene>
    <name type="primary">pbl</name>
    <name type="ordered locus">b2854</name>
</gene>
<accession>Q46790</accession>
<proteinExistence type="uncertain"/>
<protein>
    <recommendedName>
        <fullName>Putative peptidoglycan-binding-like protein</fullName>
    </recommendedName>
</protein>
<keyword id="KW-0574">Periplasm</keyword>
<keyword id="KW-1185">Reference proteome</keyword>
<keyword id="KW-0732">Signal</keyword>
<organism>
    <name type="scientific">Escherichia coli (strain K12)</name>
    <dbReference type="NCBI Taxonomy" id="83333"/>
    <lineage>
        <taxon>Bacteria</taxon>
        <taxon>Pseudomonadati</taxon>
        <taxon>Pseudomonadota</taxon>
        <taxon>Gammaproteobacteria</taxon>
        <taxon>Enterobacterales</taxon>
        <taxon>Enterobacteriaceae</taxon>
        <taxon>Escherichia</taxon>
    </lineage>
</organism>
<evidence type="ECO:0000255" key="1"/>
<evidence type="ECO:0000305" key="2"/>
<dbReference type="EMBL" id="U28375">
    <property type="protein sequence ID" value="AAA83036.1"/>
    <property type="status" value="ALT_INIT"/>
    <property type="molecule type" value="Genomic_DNA"/>
</dbReference>
<dbReference type="EMBL" id="U00096">
    <property type="status" value="NOT_ANNOTATED_CDS"/>
    <property type="molecule type" value="Genomic_DNA"/>
</dbReference>
<dbReference type="PIR" id="G65068">
    <property type="entry name" value="G65068"/>
</dbReference>
<dbReference type="SMR" id="Q46790"/>
<dbReference type="FunCoup" id="Q46790">
    <property type="interactions" value="22"/>
</dbReference>
<dbReference type="EchoBASE" id="EB2855"/>
<dbReference type="InParanoid" id="Q46790"/>
<dbReference type="OrthoDB" id="9808681at2"/>
<dbReference type="PhylomeDB" id="Q46790"/>
<dbReference type="Proteomes" id="UP000000625">
    <property type="component" value="Chromosome"/>
</dbReference>
<dbReference type="GO" id="GO:0042597">
    <property type="term" value="C:periplasmic space"/>
    <property type="evidence" value="ECO:0007669"/>
    <property type="project" value="UniProtKB-SubCell"/>
</dbReference>
<dbReference type="CDD" id="cd13400">
    <property type="entry name" value="LT_IagB-like"/>
    <property type="match status" value="1"/>
</dbReference>
<dbReference type="Gene3D" id="1.10.530.10">
    <property type="match status" value="1"/>
</dbReference>
<dbReference type="InterPro" id="IPR023346">
    <property type="entry name" value="Lysozyme-like_dom_sf"/>
</dbReference>
<dbReference type="InterPro" id="IPR008258">
    <property type="entry name" value="Transglycosylase_SLT_dom_1"/>
</dbReference>
<dbReference type="Pfam" id="PF01464">
    <property type="entry name" value="SLT"/>
    <property type="match status" value="1"/>
</dbReference>
<dbReference type="SUPFAM" id="SSF53955">
    <property type="entry name" value="Lysozyme-like"/>
    <property type="match status" value="1"/>
</dbReference>
<reference key="1">
    <citation type="journal article" date="1997" name="Science">
        <title>The complete genome sequence of Escherichia coli K-12.</title>
        <authorList>
            <person name="Blattner F.R."/>
            <person name="Plunkett G. III"/>
            <person name="Bloch C.A."/>
            <person name="Perna N.T."/>
            <person name="Burland V."/>
            <person name="Riley M."/>
            <person name="Collado-Vides J."/>
            <person name="Glasner J.D."/>
            <person name="Rode C.K."/>
            <person name="Mayhew G.F."/>
            <person name="Gregor J."/>
            <person name="Davis N.W."/>
            <person name="Kirkpatrick H.A."/>
            <person name="Goeden M.A."/>
            <person name="Rose D.J."/>
            <person name="Mau B."/>
            <person name="Shao Y."/>
        </authorList>
    </citation>
    <scope>NUCLEOTIDE SEQUENCE [LARGE SCALE GENOMIC DNA]</scope>
    <source>
        <strain>K12 / MG1655 / ATCC 47076</strain>
    </source>
</reference>